<reference key="1">
    <citation type="journal article" date="2000" name="Nature">
        <title>The genome sequence of the plant pathogen Xylella fastidiosa.</title>
        <authorList>
            <person name="Simpson A.J.G."/>
            <person name="Reinach F.C."/>
            <person name="Arruda P."/>
            <person name="Abreu F.A."/>
            <person name="Acencio M."/>
            <person name="Alvarenga R."/>
            <person name="Alves L.M.C."/>
            <person name="Araya J.E."/>
            <person name="Baia G.S."/>
            <person name="Baptista C.S."/>
            <person name="Barros M.H."/>
            <person name="Bonaccorsi E.D."/>
            <person name="Bordin S."/>
            <person name="Bove J.M."/>
            <person name="Briones M.R.S."/>
            <person name="Bueno M.R.P."/>
            <person name="Camargo A.A."/>
            <person name="Camargo L.E.A."/>
            <person name="Carraro D.M."/>
            <person name="Carrer H."/>
            <person name="Colauto N.B."/>
            <person name="Colombo C."/>
            <person name="Costa F.F."/>
            <person name="Costa M.C.R."/>
            <person name="Costa-Neto C.M."/>
            <person name="Coutinho L.L."/>
            <person name="Cristofani M."/>
            <person name="Dias-Neto E."/>
            <person name="Docena C."/>
            <person name="El-Dorry H."/>
            <person name="Facincani A.P."/>
            <person name="Ferreira A.J.S."/>
            <person name="Ferreira V.C.A."/>
            <person name="Ferro J.A."/>
            <person name="Fraga J.S."/>
            <person name="Franca S.C."/>
            <person name="Franco M.C."/>
            <person name="Frohme M."/>
            <person name="Furlan L.R."/>
            <person name="Garnier M."/>
            <person name="Goldman G.H."/>
            <person name="Goldman M.H.S."/>
            <person name="Gomes S.L."/>
            <person name="Gruber A."/>
            <person name="Ho P.L."/>
            <person name="Hoheisel J.D."/>
            <person name="Junqueira M.L."/>
            <person name="Kemper E.L."/>
            <person name="Kitajima J.P."/>
            <person name="Krieger J.E."/>
            <person name="Kuramae E.E."/>
            <person name="Laigret F."/>
            <person name="Lambais M.R."/>
            <person name="Leite L.C.C."/>
            <person name="Lemos E.G.M."/>
            <person name="Lemos M.V.F."/>
            <person name="Lopes S.A."/>
            <person name="Lopes C.R."/>
            <person name="Machado J.A."/>
            <person name="Machado M.A."/>
            <person name="Madeira A.M.B.N."/>
            <person name="Madeira H.M.F."/>
            <person name="Marino C.L."/>
            <person name="Marques M.V."/>
            <person name="Martins E.A.L."/>
            <person name="Martins E.M.F."/>
            <person name="Matsukuma A.Y."/>
            <person name="Menck C.F.M."/>
            <person name="Miracca E.C."/>
            <person name="Miyaki C.Y."/>
            <person name="Monteiro-Vitorello C.B."/>
            <person name="Moon D.H."/>
            <person name="Nagai M.A."/>
            <person name="Nascimento A.L.T.O."/>
            <person name="Netto L.E.S."/>
            <person name="Nhani A. Jr."/>
            <person name="Nobrega F.G."/>
            <person name="Nunes L.R."/>
            <person name="Oliveira M.A."/>
            <person name="de Oliveira M.C."/>
            <person name="de Oliveira R.C."/>
            <person name="Palmieri D.A."/>
            <person name="Paris A."/>
            <person name="Peixoto B.R."/>
            <person name="Pereira G.A.G."/>
            <person name="Pereira H.A. Jr."/>
            <person name="Pesquero J.B."/>
            <person name="Quaggio R.B."/>
            <person name="Roberto P.G."/>
            <person name="Rodrigues V."/>
            <person name="de Rosa A.J.M."/>
            <person name="de Rosa V.E. Jr."/>
            <person name="de Sa R.G."/>
            <person name="Santelli R.V."/>
            <person name="Sawasaki H.E."/>
            <person name="da Silva A.C.R."/>
            <person name="da Silva A.M."/>
            <person name="da Silva F.R."/>
            <person name="Silva W.A. Jr."/>
            <person name="da Silveira J.F."/>
            <person name="Silvestri M.L.Z."/>
            <person name="Siqueira W.J."/>
            <person name="de Souza A.A."/>
            <person name="de Souza A.P."/>
            <person name="Terenzi M.F."/>
            <person name="Truffi D."/>
            <person name="Tsai S.M."/>
            <person name="Tsuhako M.H."/>
            <person name="Vallada H."/>
            <person name="Van Sluys M.A."/>
            <person name="Verjovski-Almeida S."/>
            <person name="Vettore A.L."/>
            <person name="Zago M.A."/>
            <person name="Zatz M."/>
            <person name="Meidanis J."/>
            <person name="Setubal J.C."/>
        </authorList>
    </citation>
    <scope>NUCLEOTIDE SEQUENCE [LARGE SCALE GENOMIC DNA]</scope>
    <source>
        <strain>9a5c</strain>
    </source>
</reference>
<reference key="2">
    <citation type="journal article" date="2007" name="J. Bacteriol.">
        <title>BigR, a transcriptional repressor from plant-associated bacteria, regulates an operon implicated in biofilm growth.</title>
        <authorList>
            <person name="Barbosa R.L."/>
            <person name="Benedetti C.E."/>
        </authorList>
    </citation>
    <scope>REPRESSION BY BIGR</scope>
    <source>
        <strain>9a5c</strain>
    </source>
</reference>
<feature type="chain" id="PRO_0000305331" description="Probable transporter XF_0765">
    <location>
        <begin position="1"/>
        <end position="146"/>
    </location>
</feature>
<feature type="transmembrane region" description="Helical" evidence="1">
    <location>
        <begin position="9"/>
        <end position="29"/>
    </location>
</feature>
<feature type="transmembrane region" description="Helical" evidence="1">
    <location>
        <begin position="46"/>
        <end position="66"/>
    </location>
</feature>
<feature type="transmembrane region" description="Helical" evidence="1">
    <location>
        <begin position="91"/>
        <end position="111"/>
    </location>
</feature>
<feature type="transmembrane region" description="Helical" evidence="1">
    <location>
        <begin position="116"/>
        <end position="136"/>
    </location>
</feature>
<gene>
    <name type="ordered locus">XF_0765</name>
</gene>
<evidence type="ECO:0000255" key="1"/>
<evidence type="ECO:0000269" key="2">
    <source>
    </source>
</evidence>
<evidence type="ECO:0000305" key="3"/>
<comment type="subcellular location">
    <subcellularLocation>
        <location evidence="3">Cell inner membrane</location>
        <topology evidence="1">Multi-pass membrane protein</topology>
    </subcellularLocation>
</comment>
<comment type="induction">
    <text evidence="2">Repressed by BigR.</text>
</comment>
<comment type="miscellaneous">
    <text>Part of an operon that comprises bigR, blh, XF_0764 and XF_0766.</text>
</comment>
<comment type="similarity">
    <text evidence="3">Belongs to the TsuA/YedE (TC 9.B.102) family.</text>
</comment>
<keyword id="KW-0997">Cell inner membrane</keyword>
<keyword id="KW-1003">Cell membrane</keyword>
<keyword id="KW-0472">Membrane</keyword>
<keyword id="KW-0812">Transmembrane</keyword>
<keyword id="KW-1133">Transmembrane helix</keyword>
<keyword id="KW-0813">Transport</keyword>
<accession>Q9PFB3</accession>
<proteinExistence type="evidence at transcript level"/>
<dbReference type="EMBL" id="AE003849">
    <property type="protein sequence ID" value="AAF83575.1"/>
    <property type="molecule type" value="Genomic_DNA"/>
</dbReference>
<dbReference type="PIR" id="B82766">
    <property type="entry name" value="B82766"/>
</dbReference>
<dbReference type="RefSeq" id="WP_010893288.1">
    <property type="nucleotide sequence ID" value="NC_002488.3"/>
</dbReference>
<dbReference type="STRING" id="160492.XF_0765"/>
<dbReference type="KEGG" id="xfa:XF_0765"/>
<dbReference type="eggNOG" id="COG2391">
    <property type="taxonomic scope" value="Bacteria"/>
</dbReference>
<dbReference type="HOGENOM" id="CLU_037802_2_1_6"/>
<dbReference type="Proteomes" id="UP000000812">
    <property type="component" value="Chromosome"/>
</dbReference>
<dbReference type="GO" id="GO:0005886">
    <property type="term" value="C:plasma membrane"/>
    <property type="evidence" value="ECO:0007669"/>
    <property type="project" value="UniProtKB-SubCell"/>
</dbReference>
<dbReference type="InterPro" id="IPR046513">
    <property type="entry name" value="DUF6691"/>
</dbReference>
<dbReference type="Pfam" id="PF20398">
    <property type="entry name" value="DUF6691"/>
    <property type="match status" value="1"/>
</dbReference>
<organism>
    <name type="scientific">Xylella fastidiosa (strain 9a5c)</name>
    <dbReference type="NCBI Taxonomy" id="160492"/>
    <lineage>
        <taxon>Bacteria</taxon>
        <taxon>Pseudomonadati</taxon>
        <taxon>Pseudomonadota</taxon>
        <taxon>Gammaproteobacteria</taxon>
        <taxon>Lysobacterales</taxon>
        <taxon>Lysobacteraceae</taxon>
        <taxon>Xylella</taxon>
    </lineage>
</organism>
<protein>
    <recommendedName>
        <fullName evidence="3">Probable transporter XF_0765</fullName>
    </recommendedName>
</protein>
<sequence>MSLHVTLRFTVALAAGLLFGFGLALSEMINPIRVLSFLNVASGHWNPSLLFVLGSALAVAFPGMALQRRLKRPLLDECFHLPSKKVIDRRIVFGSAIFGTGWGLTGLCPGPAIASLSTGLGPVLLFVAAMAAGMIIHDRIVVRCLS</sequence>
<name>Y765_XYLFA</name>